<protein>
    <recommendedName>
        <fullName evidence="1">Histidine--tRNA ligase</fullName>
        <ecNumber evidence="1">6.1.1.21</ecNumber>
    </recommendedName>
    <alternativeName>
        <fullName evidence="1">Histidyl-tRNA synthetase</fullName>
        <shortName evidence="1">HisRS</shortName>
    </alternativeName>
</protein>
<comment type="catalytic activity">
    <reaction evidence="1">
        <text>tRNA(His) + L-histidine + ATP = L-histidyl-tRNA(His) + AMP + diphosphate + H(+)</text>
        <dbReference type="Rhea" id="RHEA:17313"/>
        <dbReference type="Rhea" id="RHEA-COMP:9665"/>
        <dbReference type="Rhea" id="RHEA-COMP:9689"/>
        <dbReference type="ChEBI" id="CHEBI:15378"/>
        <dbReference type="ChEBI" id="CHEBI:30616"/>
        <dbReference type="ChEBI" id="CHEBI:33019"/>
        <dbReference type="ChEBI" id="CHEBI:57595"/>
        <dbReference type="ChEBI" id="CHEBI:78442"/>
        <dbReference type="ChEBI" id="CHEBI:78527"/>
        <dbReference type="ChEBI" id="CHEBI:456215"/>
        <dbReference type="EC" id="6.1.1.21"/>
    </reaction>
</comment>
<comment type="subunit">
    <text evidence="1">Homodimer.</text>
</comment>
<comment type="subcellular location">
    <subcellularLocation>
        <location evidence="1">Cytoplasm</location>
    </subcellularLocation>
</comment>
<comment type="similarity">
    <text evidence="1">Belongs to the class-II aminoacyl-tRNA synthetase family.</text>
</comment>
<keyword id="KW-0030">Aminoacyl-tRNA synthetase</keyword>
<keyword id="KW-0067">ATP-binding</keyword>
<keyword id="KW-0963">Cytoplasm</keyword>
<keyword id="KW-0436">Ligase</keyword>
<keyword id="KW-0547">Nucleotide-binding</keyword>
<keyword id="KW-0648">Protein biosynthesis</keyword>
<sequence>MYKKIKGTDDIYGEDMKYWYFIENTAREITRLYGYSEIRTPIFEQTELFVRSVGEETDIVQKEMYTFKDKGDRSITLRPEGTAPTIRAFIENSMVATGLPKRLFYIGPMFRYERPQAGRQRQFHQFGIELIGSSSSLADAEAIVVADRFLKSLGLVDYTIKINSIGCEKCRAEYKKKLKEYYSDKLDKVCDDCKRRYNTNILRLLDCKVDVEYVKDAPKITDYLCDNCKKHYEETKNILDKLDINYEEDPLLVRGLDYYNGIVFEIHHGKLGAQSAIGGGGRYDNLIKELGGQQTPSLGFAMGIERLIIAVKKEGIPVEEIKNNEVFVAHLGESARIEAIKISEELRDNGISVVFNTMERGLSAQLKHASRLNCRLCLIVGENELERNVVILRNMKTGEQIEIERDYIVGTTREWIDEQ</sequence>
<reference key="1">
    <citation type="submission" date="2007-05" db="EMBL/GenBank/DDBJ databases">
        <title>Complete sequence of Thermosipho melanesiensis BI429.</title>
        <authorList>
            <consortium name="US DOE Joint Genome Institute"/>
            <person name="Copeland A."/>
            <person name="Lucas S."/>
            <person name="Lapidus A."/>
            <person name="Barry K."/>
            <person name="Glavina del Rio T."/>
            <person name="Dalin E."/>
            <person name="Tice H."/>
            <person name="Pitluck S."/>
            <person name="Chertkov O."/>
            <person name="Brettin T."/>
            <person name="Bruce D."/>
            <person name="Detter J.C."/>
            <person name="Han C."/>
            <person name="Schmutz J."/>
            <person name="Larimer F."/>
            <person name="Land M."/>
            <person name="Hauser L."/>
            <person name="Kyrpides N."/>
            <person name="Mikhailova N."/>
            <person name="Nelson K."/>
            <person name="Gogarten J.P."/>
            <person name="Noll K."/>
            <person name="Richardson P."/>
        </authorList>
    </citation>
    <scope>NUCLEOTIDE SEQUENCE [LARGE SCALE GENOMIC DNA]</scope>
    <source>
        <strain>DSM 12029 / CIP 104789 / BI429</strain>
    </source>
</reference>
<proteinExistence type="inferred from homology"/>
<accession>A6LL06</accession>
<evidence type="ECO:0000255" key="1">
    <source>
        <dbReference type="HAMAP-Rule" id="MF_00127"/>
    </source>
</evidence>
<gene>
    <name evidence="1" type="primary">hisS</name>
    <name type="ordered locus">Tmel_0744</name>
</gene>
<dbReference type="EC" id="6.1.1.21" evidence="1"/>
<dbReference type="EMBL" id="CP000716">
    <property type="protein sequence ID" value="ABR30607.1"/>
    <property type="molecule type" value="Genomic_DNA"/>
</dbReference>
<dbReference type="RefSeq" id="WP_012056968.1">
    <property type="nucleotide sequence ID" value="NC_009616.1"/>
</dbReference>
<dbReference type="SMR" id="A6LL06"/>
<dbReference type="STRING" id="391009.Tmel_0744"/>
<dbReference type="KEGG" id="tme:Tmel_0744"/>
<dbReference type="eggNOG" id="COG0124">
    <property type="taxonomic scope" value="Bacteria"/>
</dbReference>
<dbReference type="HOGENOM" id="CLU_025113_1_1_0"/>
<dbReference type="OrthoDB" id="9800814at2"/>
<dbReference type="Proteomes" id="UP000001110">
    <property type="component" value="Chromosome"/>
</dbReference>
<dbReference type="GO" id="GO:0005737">
    <property type="term" value="C:cytoplasm"/>
    <property type="evidence" value="ECO:0007669"/>
    <property type="project" value="UniProtKB-SubCell"/>
</dbReference>
<dbReference type="GO" id="GO:0005524">
    <property type="term" value="F:ATP binding"/>
    <property type="evidence" value="ECO:0007669"/>
    <property type="project" value="UniProtKB-UniRule"/>
</dbReference>
<dbReference type="GO" id="GO:0004821">
    <property type="term" value="F:histidine-tRNA ligase activity"/>
    <property type="evidence" value="ECO:0007669"/>
    <property type="project" value="UniProtKB-UniRule"/>
</dbReference>
<dbReference type="GO" id="GO:0006427">
    <property type="term" value="P:histidyl-tRNA aminoacylation"/>
    <property type="evidence" value="ECO:0007669"/>
    <property type="project" value="UniProtKB-UniRule"/>
</dbReference>
<dbReference type="CDD" id="cd00773">
    <property type="entry name" value="HisRS-like_core"/>
    <property type="match status" value="1"/>
</dbReference>
<dbReference type="CDD" id="cd00859">
    <property type="entry name" value="HisRS_anticodon"/>
    <property type="match status" value="1"/>
</dbReference>
<dbReference type="FunFam" id="3.30.930.10:FF:000005">
    <property type="entry name" value="Histidine--tRNA ligase"/>
    <property type="match status" value="1"/>
</dbReference>
<dbReference type="Gene3D" id="3.40.50.800">
    <property type="entry name" value="Anticodon-binding domain"/>
    <property type="match status" value="1"/>
</dbReference>
<dbReference type="Gene3D" id="3.30.930.10">
    <property type="entry name" value="Bira Bifunctional Protein, Domain 2"/>
    <property type="match status" value="1"/>
</dbReference>
<dbReference type="HAMAP" id="MF_00127">
    <property type="entry name" value="His_tRNA_synth"/>
    <property type="match status" value="1"/>
</dbReference>
<dbReference type="InterPro" id="IPR006195">
    <property type="entry name" value="aa-tRNA-synth_II"/>
</dbReference>
<dbReference type="InterPro" id="IPR045864">
    <property type="entry name" value="aa-tRNA-synth_II/BPL/LPL"/>
</dbReference>
<dbReference type="InterPro" id="IPR004154">
    <property type="entry name" value="Anticodon-bd"/>
</dbReference>
<dbReference type="InterPro" id="IPR036621">
    <property type="entry name" value="Anticodon-bd_dom_sf"/>
</dbReference>
<dbReference type="InterPro" id="IPR015807">
    <property type="entry name" value="His-tRNA-ligase"/>
</dbReference>
<dbReference type="InterPro" id="IPR041715">
    <property type="entry name" value="HisRS-like_core"/>
</dbReference>
<dbReference type="InterPro" id="IPR004516">
    <property type="entry name" value="HisRS/HisZ"/>
</dbReference>
<dbReference type="InterPro" id="IPR033656">
    <property type="entry name" value="HisRS_anticodon"/>
</dbReference>
<dbReference type="NCBIfam" id="TIGR00442">
    <property type="entry name" value="hisS"/>
    <property type="match status" value="1"/>
</dbReference>
<dbReference type="PANTHER" id="PTHR43707:SF1">
    <property type="entry name" value="HISTIDINE--TRNA LIGASE, MITOCHONDRIAL-RELATED"/>
    <property type="match status" value="1"/>
</dbReference>
<dbReference type="PANTHER" id="PTHR43707">
    <property type="entry name" value="HISTIDYL-TRNA SYNTHETASE"/>
    <property type="match status" value="1"/>
</dbReference>
<dbReference type="Pfam" id="PF03129">
    <property type="entry name" value="HGTP_anticodon"/>
    <property type="match status" value="1"/>
</dbReference>
<dbReference type="Pfam" id="PF13393">
    <property type="entry name" value="tRNA-synt_His"/>
    <property type="match status" value="1"/>
</dbReference>
<dbReference type="PIRSF" id="PIRSF001549">
    <property type="entry name" value="His-tRNA_synth"/>
    <property type="match status" value="1"/>
</dbReference>
<dbReference type="SUPFAM" id="SSF52954">
    <property type="entry name" value="Class II aaRS ABD-related"/>
    <property type="match status" value="1"/>
</dbReference>
<dbReference type="SUPFAM" id="SSF55681">
    <property type="entry name" value="Class II aaRS and biotin synthetases"/>
    <property type="match status" value="1"/>
</dbReference>
<dbReference type="PROSITE" id="PS50862">
    <property type="entry name" value="AA_TRNA_LIGASE_II"/>
    <property type="match status" value="1"/>
</dbReference>
<name>SYH_THEM4</name>
<organism>
    <name type="scientific">Thermosipho melanesiensis (strain DSM 12029 / CIP 104789 / BI429)</name>
    <dbReference type="NCBI Taxonomy" id="391009"/>
    <lineage>
        <taxon>Bacteria</taxon>
        <taxon>Thermotogati</taxon>
        <taxon>Thermotogota</taxon>
        <taxon>Thermotogae</taxon>
        <taxon>Thermotogales</taxon>
        <taxon>Fervidobacteriaceae</taxon>
        <taxon>Thermosipho</taxon>
    </lineage>
</organism>
<feature type="chain" id="PRO_1000016477" description="Histidine--tRNA ligase">
    <location>
        <begin position="1"/>
        <end position="419"/>
    </location>
</feature>